<gene>
    <name evidence="1" type="primary">guaA</name>
    <name type="ordered locus">CJE1385</name>
</gene>
<feature type="chain" id="PRO_0000229415" description="GMP synthase [glutamine-hydrolyzing]">
    <location>
        <begin position="1"/>
        <end position="511"/>
    </location>
</feature>
<feature type="domain" description="Glutamine amidotransferase type-1" evidence="1">
    <location>
        <begin position="5"/>
        <end position="195"/>
    </location>
</feature>
<feature type="domain" description="GMPS ATP-PPase" evidence="1">
    <location>
        <begin position="196"/>
        <end position="386"/>
    </location>
</feature>
<feature type="active site" description="Nucleophile" evidence="1">
    <location>
        <position position="82"/>
    </location>
</feature>
<feature type="active site" evidence="1">
    <location>
        <position position="169"/>
    </location>
</feature>
<feature type="active site" evidence="1">
    <location>
        <position position="171"/>
    </location>
</feature>
<feature type="binding site" evidence="1">
    <location>
        <begin position="223"/>
        <end position="229"/>
    </location>
    <ligand>
        <name>ATP</name>
        <dbReference type="ChEBI" id="CHEBI:30616"/>
    </ligand>
</feature>
<evidence type="ECO:0000255" key="1">
    <source>
        <dbReference type="HAMAP-Rule" id="MF_00344"/>
    </source>
</evidence>
<proteinExistence type="inferred from homology"/>
<accession>Q5HTL3</accession>
<keyword id="KW-0067">ATP-binding</keyword>
<keyword id="KW-0315">Glutamine amidotransferase</keyword>
<keyword id="KW-0332">GMP biosynthesis</keyword>
<keyword id="KW-0436">Ligase</keyword>
<keyword id="KW-0547">Nucleotide-binding</keyword>
<keyword id="KW-0658">Purine biosynthesis</keyword>
<reference key="1">
    <citation type="journal article" date="2005" name="PLoS Biol.">
        <title>Major structural differences and novel potential virulence mechanisms from the genomes of multiple Campylobacter species.</title>
        <authorList>
            <person name="Fouts D.E."/>
            <person name="Mongodin E.F."/>
            <person name="Mandrell R.E."/>
            <person name="Miller W.G."/>
            <person name="Rasko D.A."/>
            <person name="Ravel J."/>
            <person name="Brinkac L.M."/>
            <person name="DeBoy R.T."/>
            <person name="Parker C.T."/>
            <person name="Daugherty S.C."/>
            <person name="Dodson R.J."/>
            <person name="Durkin A.S."/>
            <person name="Madupu R."/>
            <person name="Sullivan S.A."/>
            <person name="Shetty J.U."/>
            <person name="Ayodeji M.A."/>
            <person name="Shvartsbeyn A."/>
            <person name="Schatz M.C."/>
            <person name="Badger J.H."/>
            <person name="Fraser C.M."/>
            <person name="Nelson K.E."/>
        </authorList>
    </citation>
    <scope>NUCLEOTIDE SEQUENCE [LARGE SCALE GENOMIC DNA]</scope>
    <source>
        <strain>RM1221</strain>
    </source>
</reference>
<name>GUAA_CAMJR</name>
<organism>
    <name type="scientific">Campylobacter jejuni (strain RM1221)</name>
    <dbReference type="NCBI Taxonomy" id="195099"/>
    <lineage>
        <taxon>Bacteria</taxon>
        <taxon>Pseudomonadati</taxon>
        <taxon>Campylobacterota</taxon>
        <taxon>Epsilonproteobacteria</taxon>
        <taxon>Campylobacterales</taxon>
        <taxon>Campylobacteraceae</taxon>
        <taxon>Campylobacter</taxon>
    </lineage>
</organism>
<dbReference type="EC" id="6.3.5.2" evidence="1"/>
<dbReference type="EMBL" id="CP000025">
    <property type="protein sequence ID" value="AAW35705.1"/>
    <property type="molecule type" value="Genomic_DNA"/>
</dbReference>
<dbReference type="RefSeq" id="WP_011049914.1">
    <property type="nucleotide sequence ID" value="NC_003912.7"/>
</dbReference>
<dbReference type="SMR" id="Q5HTL3"/>
<dbReference type="MEROPS" id="C26.957"/>
<dbReference type="KEGG" id="cjr:CJE1385"/>
<dbReference type="HOGENOM" id="CLU_014340_0_5_7"/>
<dbReference type="UniPathway" id="UPA00189">
    <property type="reaction ID" value="UER00296"/>
</dbReference>
<dbReference type="GO" id="GO:0005829">
    <property type="term" value="C:cytosol"/>
    <property type="evidence" value="ECO:0007669"/>
    <property type="project" value="TreeGrafter"/>
</dbReference>
<dbReference type="GO" id="GO:0005524">
    <property type="term" value="F:ATP binding"/>
    <property type="evidence" value="ECO:0007669"/>
    <property type="project" value="UniProtKB-UniRule"/>
</dbReference>
<dbReference type="GO" id="GO:0003921">
    <property type="term" value="F:GMP synthase activity"/>
    <property type="evidence" value="ECO:0007669"/>
    <property type="project" value="InterPro"/>
</dbReference>
<dbReference type="CDD" id="cd01742">
    <property type="entry name" value="GATase1_GMP_Synthase"/>
    <property type="match status" value="1"/>
</dbReference>
<dbReference type="CDD" id="cd01997">
    <property type="entry name" value="GMP_synthase_C"/>
    <property type="match status" value="1"/>
</dbReference>
<dbReference type="FunFam" id="3.30.300.10:FF:000002">
    <property type="entry name" value="GMP synthase [glutamine-hydrolyzing]"/>
    <property type="match status" value="1"/>
</dbReference>
<dbReference type="FunFam" id="3.40.50.620:FF:000001">
    <property type="entry name" value="GMP synthase [glutamine-hydrolyzing]"/>
    <property type="match status" value="1"/>
</dbReference>
<dbReference type="FunFam" id="3.40.50.880:FF:000001">
    <property type="entry name" value="GMP synthase [glutamine-hydrolyzing]"/>
    <property type="match status" value="1"/>
</dbReference>
<dbReference type="Gene3D" id="3.30.300.10">
    <property type="match status" value="1"/>
</dbReference>
<dbReference type="Gene3D" id="3.40.50.880">
    <property type="match status" value="1"/>
</dbReference>
<dbReference type="Gene3D" id="3.40.50.620">
    <property type="entry name" value="HUPs"/>
    <property type="match status" value="1"/>
</dbReference>
<dbReference type="HAMAP" id="MF_00344">
    <property type="entry name" value="GMP_synthase"/>
    <property type="match status" value="1"/>
</dbReference>
<dbReference type="InterPro" id="IPR029062">
    <property type="entry name" value="Class_I_gatase-like"/>
</dbReference>
<dbReference type="InterPro" id="IPR017926">
    <property type="entry name" value="GATASE"/>
</dbReference>
<dbReference type="InterPro" id="IPR001674">
    <property type="entry name" value="GMP_synth_C"/>
</dbReference>
<dbReference type="InterPro" id="IPR004739">
    <property type="entry name" value="GMP_synth_GATase"/>
</dbReference>
<dbReference type="InterPro" id="IPR022955">
    <property type="entry name" value="GMP_synthase"/>
</dbReference>
<dbReference type="InterPro" id="IPR025777">
    <property type="entry name" value="GMPS_ATP_PPase_dom"/>
</dbReference>
<dbReference type="InterPro" id="IPR022310">
    <property type="entry name" value="NAD/GMP_synthase"/>
</dbReference>
<dbReference type="InterPro" id="IPR014729">
    <property type="entry name" value="Rossmann-like_a/b/a_fold"/>
</dbReference>
<dbReference type="NCBIfam" id="TIGR00884">
    <property type="entry name" value="guaA_Cterm"/>
    <property type="match status" value="1"/>
</dbReference>
<dbReference type="NCBIfam" id="TIGR00888">
    <property type="entry name" value="guaA_Nterm"/>
    <property type="match status" value="1"/>
</dbReference>
<dbReference type="NCBIfam" id="NF000848">
    <property type="entry name" value="PRK00074.1"/>
    <property type="match status" value="1"/>
</dbReference>
<dbReference type="PANTHER" id="PTHR11922:SF2">
    <property type="entry name" value="GMP SYNTHASE [GLUTAMINE-HYDROLYZING]"/>
    <property type="match status" value="1"/>
</dbReference>
<dbReference type="PANTHER" id="PTHR11922">
    <property type="entry name" value="GMP SYNTHASE-RELATED"/>
    <property type="match status" value="1"/>
</dbReference>
<dbReference type="Pfam" id="PF00117">
    <property type="entry name" value="GATase"/>
    <property type="match status" value="1"/>
</dbReference>
<dbReference type="Pfam" id="PF00958">
    <property type="entry name" value="GMP_synt_C"/>
    <property type="match status" value="1"/>
</dbReference>
<dbReference type="Pfam" id="PF02540">
    <property type="entry name" value="NAD_synthase"/>
    <property type="match status" value="1"/>
</dbReference>
<dbReference type="PRINTS" id="PR00097">
    <property type="entry name" value="ANTSNTHASEII"/>
</dbReference>
<dbReference type="PRINTS" id="PR00096">
    <property type="entry name" value="GATASE"/>
</dbReference>
<dbReference type="SUPFAM" id="SSF52402">
    <property type="entry name" value="Adenine nucleotide alpha hydrolases-like"/>
    <property type="match status" value="1"/>
</dbReference>
<dbReference type="SUPFAM" id="SSF52317">
    <property type="entry name" value="Class I glutamine amidotransferase-like"/>
    <property type="match status" value="1"/>
</dbReference>
<dbReference type="SUPFAM" id="SSF54810">
    <property type="entry name" value="GMP synthetase C-terminal dimerisation domain"/>
    <property type="match status" value="1"/>
</dbReference>
<dbReference type="PROSITE" id="PS51273">
    <property type="entry name" value="GATASE_TYPE_1"/>
    <property type="match status" value="1"/>
</dbReference>
<dbReference type="PROSITE" id="PS51553">
    <property type="entry name" value="GMPS_ATP_PPASE"/>
    <property type="match status" value="1"/>
</dbReference>
<sequence length="511" mass="57046">MKKADILVLDFGSQYTQLIARRLREQGVYAEILPFNVSLTDIKAKEPKGIILSGGPASVYATDAYFCDKGIFDLNLPILGICYGMQLMAHHYKATVAPAGHKEYGKANIEIKKDNALFKNLPKKQTVWMSHSDKVENLPQGFEVLATSENSPFCVFGNEDKKFFALQFHPEVQHSEFGKNILKNFAKYACNCESVWNMGSFAKTQAEKIREEVGNDKVLCAVSGGVDSSVVAALLASAIKEQVIVVFVDNGLLRSREKEQVEFMFKNTLGIDLISIDASEIFLSRLANVTDPEQKRKIIGNTFIEVFEEEAKKHKDVKYLAQGTLYTDIIESSVVGASKTIKSHHNVGGLPEKMNLKLIEPLKEIFKDEVRALGLELGLSKEVVYRHPFPGPGLAIRIMGEVNRPGLELLRKADVILLEELKSTGWYDKTWQAFCVLLNVKSVGVMGDNRTYDNAVCIRVVDASDGMTATFSHLPYEVLENISRRIINEVEGINRVVYDISSKPPATIEWE</sequence>
<protein>
    <recommendedName>
        <fullName evidence="1">GMP synthase [glutamine-hydrolyzing]</fullName>
        <ecNumber evidence="1">6.3.5.2</ecNumber>
    </recommendedName>
    <alternativeName>
        <fullName evidence="1">GMP synthetase</fullName>
    </alternativeName>
    <alternativeName>
        <fullName evidence="1">Glutamine amidotransferase</fullName>
    </alternativeName>
</protein>
<comment type="function">
    <text evidence="1">Catalyzes the synthesis of GMP from XMP.</text>
</comment>
<comment type="catalytic activity">
    <reaction evidence="1">
        <text>XMP + L-glutamine + ATP + H2O = GMP + L-glutamate + AMP + diphosphate + 2 H(+)</text>
        <dbReference type="Rhea" id="RHEA:11680"/>
        <dbReference type="ChEBI" id="CHEBI:15377"/>
        <dbReference type="ChEBI" id="CHEBI:15378"/>
        <dbReference type="ChEBI" id="CHEBI:29985"/>
        <dbReference type="ChEBI" id="CHEBI:30616"/>
        <dbReference type="ChEBI" id="CHEBI:33019"/>
        <dbReference type="ChEBI" id="CHEBI:57464"/>
        <dbReference type="ChEBI" id="CHEBI:58115"/>
        <dbReference type="ChEBI" id="CHEBI:58359"/>
        <dbReference type="ChEBI" id="CHEBI:456215"/>
        <dbReference type="EC" id="6.3.5.2"/>
    </reaction>
</comment>
<comment type="pathway">
    <text evidence="1">Purine metabolism; GMP biosynthesis; GMP from XMP (L-Gln route): step 1/1.</text>
</comment>
<comment type="subunit">
    <text evidence="1">Homodimer.</text>
</comment>